<gene>
    <name type="primary">GRWD1</name>
</gene>
<keyword id="KW-0158">Chromosome</keyword>
<keyword id="KW-0539">Nucleus</keyword>
<keyword id="KW-0597">Phosphoprotein</keyword>
<keyword id="KW-1185">Reference proteome</keyword>
<keyword id="KW-0677">Repeat</keyword>
<keyword id="KW-0853">WD repeat</keyword>
<sequence length="446" mass="49463">MAALKGRRRTCEPGESMETESQETGSKGQAQVYLPGRGPPLREGEELVMDEEAYVLYHRAQTGAPCLSFDIVRDHLGDNRTELPLTLYLCAGTQAESSQSNRLMMLRMHNLHGTKPPPPEGSDDEEEEDDEEDEEERKPQLELAMVPHYGGINRVRVSWLGEEPVAGVWSEKGQVEVFALRRLLQVVDDPQALATFLRDEQTRMKPIFAFSGHMGEGFALDWSPRVPGRLLTGDCQKNIHLWTPTDGGSWHVDQRPFVGHTRSVEDLQWSPTEDTVFASCSADASIRIWDIRAAPSKACMLTTATAHDGDVNVINWSHREPFLLSGGDDGALKVWDLRQFKSGSPVATFKQHVAPVTSVEWHPQDSGVFAASGADNQITQWDLAVERDPEAGDAETDPGLADLPQQLLFVHQGETDLKELHWHPQCPGVLVSTALSGFTVFRTISV</sequence>
<protein>
    <recommendedName>
        <fullName>Glutamate-rich WD repeat-containing protein 1</fullName>
    </recommendedName>
</protein>
<proteinExistence type="evidence at transcript level"/>
<name>GRWD1_BOVIN</name>
<comment type="function">
    <text evidence="1">Histone binding-protein that regulates chromatin dynamics and minichromosome maintenance (MCM) loading at replication origins, possibly by promoting chromatin openness.</text>
</comment>
<comment type="subunit">
    <text evidence="1">Interacts with METTL18. Interacts with CDT1; origin binding of GRWD1 is dependent on CDT1. Interacts with CDC6; origin binding of GRWD1 is dependent on CDC6. Binds to histone H2A-H2B and H3-H4 complexes.</text>
</comment>
<comment type="subcellular location">
    <subcellularLocation>
        <location evidence="1">Nucleus</location>
        <location evidence="1">Nucleolus</location>
    </subcellularLocation>
    <subcellularLocation>
        <location evidence="1">Nucleus</location>
    </subcellularLocation>
    <subcellularLocation>
        <location evidence="1">Chromosome</location>
    </subcellularLocation>
    <text evidence="1">Present in the nucleus throughout interphase and is detached from chromatin at the onset of mitosis and rebinds at telophase when the pre-replication complexes (pre-RC) is formed.</text>
</comment>
<reference key="1">
    <citation type="submission" date="2006-05" db="EMBL/GenBank/DDBJ databases">
        <authorList>
            <consortium name="NIH - Mammalian Gene Collection (MGC) project"/>
        </authorList>
    </citation>
    <scope>NUCLEOTIDE SEQUENCE [LARGE SCALE MRNA]</scope>
    <source>
        <strain>Hereford</strain>
        <tissue>Ascending colon</tissue>
    </source>
</reference>
<accession>Q1JQD2</accession>
<dbReference type="EMBL" id="BC116037">
    <property type="protein sequence ID" value="AAI16038.1"/>
    <property type="molecule type" value="mRNA"/>
</dbReference>
<dbReference type="RefSeq" id="NP_001069707.1">
    <property type="nucleotide sequence ID" value="NM_001076239.1"/>
</dbReference>
<dbReference type="SMR" id="Q1JQD2"/>
<dbReference type="FunCoup" id="Q1JQD2">
    <property type="interactions" value="2873"/>
</dbReference>
<dbReference type="STRING" id="9913.ENSBTAP00000000088"/>
<dbReference type="PaxDb" id="9913-ENSBTAP00000000088"/>
<dbReference type="GeneID" id="540739"/>
<dbReference type="KEGG" id="bta:540739"/>
<dbReference type="CTD" id="83743"/>
<dbReference type="VEuPathDB" id="HostDB:ENSBTAG00000000080"/>
<dbReference type="eggNOG" id="KOG0302">
    <property type="taxonomic scope" value="Eukaryota"/>
</dbReference>
<dbReference type="HOGENOM" id="CLU_025272_1_1_1"/>
<dbReference type="InParanoid" id="Q1JQD2"/>
<dbReference type="OMA" id="RHWKPNA"/>
<dbReference type="OrthoDB" id="2161379at2759"/>
<dbReference type="TreeFam" id="TF312982"/>
<dbReference type="CD-CODE" id="D7FE2080">
    <property type="entry name" value="Nucleolus"/>
</dbReference>
<dbReference type="Proteomes" id="UP000009136">
    <property type="component" value="Chromosome 18"/>
</dbReference>
<dbReference type="Bgee" id="ENSBTAG00000000080">
    <property type="expression patterns" value="Expressed in conceptus and 106 other cell types or tissues"/>
</dbReference>
<dbReference type="GO" id="GO:0005694">
    <property type="term" value="C:chromosome"/>
    <property type="evidence" value="ECO:0007669"/>
    <property type="project" value="UniProtKB-SubCell"/>
</dbReference>
<dbReference type="GO" id="GO:0005730">
    <property type="term" value="C:nucleolus"/>
    <property type="evidence" value="ECO:0000318"/>
    <property type="project" value="GO_Central"/>
</dbReference>
<dbReference type="GO" id="GO:0005634">
    <property type="term" value="C:nucleus"/>
    <property type="evidence" value="ECO:0000250"/>
    <property type="project" value="UniProtKB"/>
</dbReference>
<dbReference type="GO" id="GO:0003682">
    <property type="term" value="F:chromatin binding"/>
    <property type="evidence" value="ECO:0000250"/>
    <property type="project" value="UniProtKB"/>
</dbReference>
<dbReference type="GO" id="GO:0003688">
    <property type="term" value="F:DNA replication origin binding"/>
    <property type="evidence" value="ECO:0000250"/>
    <property type="project" value="UniProtKB"/>
</dbReference>
<dbReference type="GO" id="GO:0042393">
    <property type="term" value="F:histone binding"/>
    <property type="evidence" value="ECO:0000250"/>
    <property type="project" value="UniProtKB"/>
</dbReference>
<dbReference type="GO" id="GO:0006260">
    <property type="term" value="P:DNA replication"/>
    <property type="evidence" value="ECO:0000250"/>
    <property type="project" value="UniProtKB"/>
</dbReference>
<dbReference type="GO" id="GO:0006334">
    <property type="term" value="P:nucleosome assembly"/>
    <property type="evidence" value="ECO:0000250"/>
    <property type="project" value="UniProtKB"/>
</dbReference>
<dbReference type="GO" id="GO:0006337">
    <property type="term" value="P:nucleosome disassembly"/>
    <property type="evidence" value="ECO:0000250"/>
    <property type="project" value="UniProtKB"/>
</dbReference>
<dbReference type="GO" id="GO:0042254">
    <property type="term" value="P:ribosome biogenesis"/>
    <property type="evidence" value="ECO:0000318"/>
    <property type="project" value="GO_Central"/>
</dbReference>
<dbReference type="FunFam" id="2.130.10.10:FF:000332">
    <property type="entry name" value="glutamate-rich WD repeat-containing protein 1"/>
    <property type="match status" value="1"/>
</dbReference>
<dbReference type="Gene3D" id="2.130.10.10">
    <property type="entry name" value="YVTN repeat-like/Quinoprotein amine dehydrogenase"/>
    <property type="match status" value="1"/>
</dbReference>
<dbReference type="InterPro" id="IPR020472">
    <property type="entry name" value="G-protein_beta_WD-40_rep"/>
</dbReference>
<dbReference type="InterPro" id="IPR051972">
    <property type="entry name" value="Glutamate-rich_WD_repeat"/>
</dbReference>
<dbReference type="InterPro" id="IPR022052">
    <property type="entry name" value="Histone-bd_RBBP4-like_N"/>
</dbReference>
<dbReference type="InterPro" id="IPR015943">
    <property type="entry name" value="WD40/YVTN_repeat-like_dom_sf"/>
</dbReference>
<dbReference type="InterPro" id="IPR019775">
    <property type="entry name" value="WD40_repeat_CS"/>
</dbReference>
<dbReference type="InterPro" id="IPR036322">
    <property type="entry name" value="WD40_repeat_dom_sf"/>
</dbReference>
<dbReference type="InterPro" id="IPR001680">
    <property type="entry name" value="WD40_rpt"/>
</dbReference>
<dbReference type="PANTHER" id="PTHR45903">
    <property type="entry name" value="GLUTAMATE-RICH WD REPEAT-CONTAINING PROTEIN 1"/>
    <property type="match status" value="1"/>
</dbReference>
<dbReference type="PANTHER" id="PTHR45903:SF1">
    <property type="entry name" value="GLUTAMATE-RICH WD REPEAT-CONTAINING PROTEIN 1"/>
    <property type="match status" value="1"/>
</dbReference>
<dbReference type="Pfam" id="PF12265">
    <property type="entry name" value="CAF1C_H4-bd"/>
    <property type="match status" value="1"/>
</dbReference>
<dbReference type="Pfam" id="PF00400">
    <property type="entry name" value="WD40"/>
    <property type="match status" value="3"/>
</dbReference>
<dbReference type="PRINTS" id="PR00320">
    <property type="entry name" value="GPROTEINBRPT"/>
</dbReference>
<dbReference type="SMART" id="SM00320">
    <property type="entry name" value="WD40"/>
    <property type="match status" value="5"/>
</dbReference>
<dbReference type="SUPFAM" id="SSF50978">
    <property type="entry name" value="WD40 repeat-like"/>
    <property type="match status" value="1"/>
</dbReference>
<dbReference type="PROSITE" id="PS00678">
    <property type="entry name" value="WD_REPEATS_1"/>
    <property type="match status" value="1"/>
</dbReference>
<dbReference type="PROSITE" id="PS50082">
    <property type="entry name" value="WD_REPEATS_2"/>
    <property type="match status" value="3"/>
</dbReference>
<dbReference type="PROSITE" id="PS50294">
    <property type="entry name" value="WD_REPEATS_REGION"/>
    <property type="match status" value="1"/>
</dbReference>
<evidence type="ECO:0000250" key="1">
    <source>
        <dbReference type="UniProtKB" id="Q9BQ67"/>
    </source>
</evidence>
<evidence type="ECO:0000256" key="2">
    <source>
        <dbReference type="SAM" id="MobiDB-lite"/>
    </source>
</evidence>
<organism>
    <name type="scientific">Bos taurus</name>
    <name type="common">Bovine</name>
    <dbReference type="NCBI Taxonomy" id="9913"/>
    <lineage>
        <taxon>Eukaryota</taxon>
        <taxon>Metazoa</taxon>
        <taxon>Chordata</taxon>
        <taxon>Craniata</taxon>
        <taxon>Vertebrata</taxon>
        <taxon>Euteleostomi</taxon>
        <taxon>Mammalia</taxon>
        <taxon>Eutheria</taxon>
        <taxon>Laurasiatheria</taxon>
        <taxon>Artiodactyla</taxon>
        <taxon>Ruminantia</taxon>
        <taxon>Pecora</taxon>
        <taxon>Bovidae</taxon>
        <taxon>Bovinae</taxon>
        <taxon>Bos</taxon>
    </lineage>
</organism>
<feature type="chain" id="PRO_0000328717" description="Glutamate-rich WD repeat-containing protein 1">
    <location>
        <begin position="1"/>
        <end position="446"/>
    </location>
</feature>
<feature type="repeat" description="WD 1">
    <location>
        <begin position="212"/>
        <end position="252"/>
    </location>
</feature>
<feature type="repeat" description="WD 2">
    <location>
        <begin position="259"/>
        <end position="299"/>
    </location>
</feature>
<feature type="repeat" description="WD 3">
    <location>
        <begin position="306"/>
        <end position="345"/>
    </location>
</feature>
<feature type="repeat" description="WD 4">
    <location>
        <begin position="351"/>
        <end position="391"/>
    </location>
</feature>
<feature type="repeat" description="WD 5">
    <location>
        <begin position="412"/>
        <end position="445"/>
    </location>
</feature>
<feature type="region of interest" description="Disordered" evidence="2">
    <location>
        <begin position="1"/>
        <end position="42"/>
    </location>
</feature>
<feature type="region of interest" description="Disordered" evidence="2">
    <location>
        <begin position="110"/>
        <end position="141"/>
    </location>
</feature>
<feature type="compositionally biased region" description="Acidic residues" evidence="2">
    <location>
        <begin position="121"/>
        <end position="135"/>
    </location>
</feature>
<feature type="modified residue" description="Phosphothreonine" evidence="1">
    <location>
        <position position="10"/>
    </location>
</feature>
<feature type="modified residue" description="Phosphoserine" evidence="1">
    <location>
        <position position="122"/>
    </location>
</feature>
<feature type="modified residue" description="Phosphoserine" evidence="1">
    <location>
        <position position="344"/>
    </location>
</feature>